<sequence>MAAGKEIRGKIKSVENTKKITKAMEMVAASKMRKAQERMRAARPYADKIRNITANLSRATPEYHHPFVVKNSGSGVVGMIIVTTDKGLCGGMNTNVLRLVTNKMRELDAAGTKVQAVAIGNKGLGFLNRIGAKVVSQATQLGDTPHLDKLIGPVKVLLDLYAEGKLDAVYICYTRFLNTMKQEPQVEQLLPLSDERLSQSAAEQQSHGWDYIYEPDAQAVIDNLMVRYAEALIYQSVAENMASEQSARMVAMKAATDNAGSLIGELKLVYNKTRQAAITKELSEIVSGAAAVG</sequence>
<comment type="function">
    <text evidence="1">Produces ATP from ADP in the presence of a proton gradient across the membrane. The gamma chain is believed to be important in regulating ATPase activity and the flow of protons through the CF(0) complex.</text>
</comment>
<comment type="subunit">
    <text evidence="1">F-type ATPases have 2 components, CF(1) - the catalytic core - and CF(0) - the membrane proton channel. CF(1) has five subunits: alpha(3), beta(3), gamma(1), delta(1), epsilon(1). CF(0) has three main subunits: a, b and c.</text>
</comment>
<comment type="subcellular location">
    <subcellularLocation>
        <location evidence="1">Cell inner membrane</location>
        <topology evidence="1">Peripheral membrane protein</topology>
    </subcellularLocation>
</comment>
<comment type="similarity">
    <text evidence="1">Belongs to the ATPase gamma chain family.</text>
</comment>
<name>ATPG_LEPCP</name>
<organism>
    <name type="scientific">Leptothrix cholodnii (strain ATCC 51168 / LMG 8142 / SP-6)</name>
    <name type="common">Leptothrix discophora (strain SP-6)</name>
    <dbReference type="NCBI Taxonomy" id="395495"/>
    <lineage>
        <taxon>Bacteria</taxon>
        <taxon>Pseudomonadati</taxon>
        <taxon>Pseudomonadota</taxon>
        <taxon>Betaproteobacteria</taxon>
        <taxon>Burkholderiales</taxon>
        <taxon>Sphaerotilaceae</taxon>
        <taxon>Leptothrix</taxon>
    </lineage>
</organism>
<accession>B1Y3S8</accession>
<keyword id="KW-0066">ATP synthesis</keyword>
<keyword id="KW-0997">Cell inner membrane</keyword>
<keyword id="KW-1003">Cell membrane</keyword>
<keyword id="KW-0139">CF(1)</keyword>
<keyword id="KW-0375">Hydrogen ion transport</keyword>
<keyword id="KW-0406">Ion transport</keyword>
<keyword id="KW-0472">Membrane</keyword>
<keyword id="KW-1185">Reference proteome</keyword>
<keyword id="KW-0813">Transport</keyword>
<proteinExistence type="inferred from homology"/>
<feature type="chain" id="PRO_1000134172" description="ATP synthase gamma chain">
    <location>
        <begin position="1"/>
        <end position="293"/>
    </location>
</feature>
<gene>
    <name evidence="1" type="primary">atpG</name>
    <name type="ordered locus">Lcho_3527</name>
</gene>
<evidence type="ECO:0000255" key="1">
    <source>
        <dbReference type="HAMAP-Rule" id="MF_00815"/>
    </source>
</evidence>
<dbReference type="EMBL" id="CP001013">
    <property type="protein sequence ID" value="ACB35781.1"/>
    <property type="molecule type" value="Genomic_DNA"/>
</dbReference>
<dbReference type="RefSeq" id="WP_012348528.1">
    <property type="nucleotide sequence ID" value="NC_010524.1"/>
</dbReference>
<dbReference type="SMR" id="B1Y3S8"/>
<dbReference type="STRING" id="395495.Lcho_3527"/>
<dbReference type="KEGG" id="lch:Lcho_3527"/>
<dbReference type="eggNOG" id="COG0224">
    <property type="taxonomic scope" value="Bacteria"/>
</dbReference>
<dbReference type="HOGENOM" id="CLU_050669_0_1_4"/>
<dbReference type="OrthoDB" id="9812769at2"/>
<dbReference type="Proteomes" id="UP000001693">
    <property type="component" value="Chromosome"/>
</dbReference>
<dbReference type="GO" id="GO:0005886">
    <property type="term" value="C:plasma membrane"/>
    <property type="evidence" value="ECO:0007669"/>
    <property type="project" value="UniProtKB-SubCell"/>
</dbReference>
<dbReference type="GO" id="GO:0045259">
    <property type="term" value="C:proton-transporting ATP synthase complex"/>
    <property type="evidence" value="ECO:0007669"/>
    <property type="project" value="UniProtKB-KW"/>
</dbReference>
<dbReference type="GO" id="GO:0005524">
    <property type="term" value="F:ATP binding"/>
    <property type="evidence" value="ECO:0007669"/>
    <property type="project" value="UniProtKB-UniRule"/>
</dbReference>
<dbReference type="GO" id="GO:0046933">
    <property type="term" value="F:proton-transporting ATP synthase activity, rotational mechanism"/>
    <property type="evidence" value="ECO:0007669"/>
    <property type="project" value="UniProtKB-UniRule"/>
</dbReference>
<dbReference type="GO" id="GO:0042777">
    <property type="term" value="P:proton motive force-driven plasma membrane ATP synthesis"/>
    <property type="evidence" value="ECO:0007669"/>
    <property type="project" value="UniProtKB-UniRule"/>
</dbReference>
<dbReference type="CDD" id="cd12151">
    <property type="entry name" value="F1-ATPase_gamma"/>
    <property type="match status" value="1"/>
</dbReference>
<dbReference type="FunFam" id="1.10.287.80:FF:000005">
    <property type="entry name" value="ATP synthase gamma chain"/>
    <property type="match status" value="1"/>
</dbReference>
<dbReference type="Gene3D" id="3.40.1380.10">
    <property type="match status" value="1"/>
</dbReference>
<dbReference type="Gene3D" id="1.10.287.80">
    <property type="entry name" value="ATP synthase, gamma subunit, helix hairpin domain"/>
    <property type="match status" value="1"/>
</dbReference>
<dbReference type="HAMAP" id="MF_00815">
    <property type="entry name" value="ATP_synth_gamma_bact"/>
    <property type="match status" value="1"/>
</dbReference>
<dbReference type="InterPro" id="IPR035968">
    <property type="entry name" value="ATP_synth_F1_ATPase_gsu"/>
</dbReference>
<dbReference type="InterPro" id="IPR000131">
    <property type="entry name" value="ATP_synth_F1_gsu"/>
</dbReference>
<dbReference type="InterPro" id="IPR023632">
    <property type="entry name" value="ATP_synth_F1_gsu_CS"/>
</dbReference>
<dbReference type="NCBIfam" id="TIGR01146">
    <property type="entry name" value="ATPsyn_F1gamma"/>
    <property type="match status" value="1"/>
</dbReference>
<dbReference type="NCBIfam" id="NF004144">
    <property type="entry name" value="PRK05621.1-1"/>
    <property type="match status" value="1"/>
</dbReference>
<dbReference type="PANTHER" id="PTHR11693">
    <property type="entry name" value="ATP SYNTHASE GAMMA CHAIN"/>
    <property type="match status" value="1"/>
</dbReference>
<dbReference type="PANTHER" id="PTHR11693:SF22">
    <property type="entry name" value="ATP SYNTHASE SUBUNIT GAMMA, MITOCHONDRIAL"/>
    <property type="match status" value="1"/>
</dbReference>
<dbReference type="Pfam" id="PF00231">
    <property type="entry name" value="ATP-synt"/>
    <property type="match status" value="1"/>
</dbReference>
<dbReference type="PRINTS" id="PR00126">
    <property type="entry name" value="ATPASEGAMMA"/>
</dbReference>
<dbReference type="SUPFAM" id="SSF52943">
    <property type="entry name" value="ATP synthase (F1-ATPase), gamma subunit"/>
    <property type="match status" value="1"/>
</dbReference>
<dbReference type="PROSITE" id="PS00153">
    <property type="entry name" value="ATPASE_GAMMA"/>
    <property type="match status" value="1"/>
</dbReference>
<protein>
    <recommendedName>
        <fullName evidence="1">ATP synthase gamma chain</fullName>
    </recommendedName>
    <alternativeName>
        <fullName evidence="1">ATP synthase F1 sector gamma subunit</fullName>
    </alternativeName>
    <alternativeName>
        <fullName evidence="1">F-ATPase gamma subunit</fullName>
    </alternativeName>
</protein>
<reference key="1">
    <citation type="submission" date="2008-03" db="EMBL/GenBank/DDBJ databases">
        <title>Complete sequence of Leptothrix cholodnii SP-6.</title>
        <authorList>
            <consortium name="US DOE Joint Genome Institute"/>
            <person name="Copeland A."/>
            <person name="Lucas S."/>
            <person name="Lapidus A."/>
            <person name="Glavina del Rio T."/>
            <person name="Dalin E."/>
            <person name="Tice H."/>
            <person name="Bruce D."/>
            <person name="Goodwin L."/>
            <person name="Pitluck S."/>
            <person name="Chertkov O."/>
            <person name="Brettin T."/>
            <person name="Detter J.C."/>
            <person name="Han C."/>
            <person name="Kuske C.R."/>
            <person name="Schmutz J."/>
            <person name="Larimer F."/>
            <person name="Land M."/>
            <person name="Hauser L."/>
            <person name="Kyrpides N."/>
            <person name="Lykidis A."/>
            <person name="Emerson D."/>
            <person name="Richardson P."/>
        </authorList>
    </citation>
    <scope>NUCLEOTIDE SEQUENCE [LARGE SCALE GENOMIC DNA]</scope>
    <source>
        <strain>ATCC 51168 / LMG 8142 / SP-6</strain>
    </source>
</reference>